<sequence length="429" mass="46060">MRKFDKSIAAFEEAQDLMPGGVNSPVRAFKSVGMNPLFMERGKGSKVYDIDGNEYIDYVLSWGPLIHGHANDRVVEALKAVAERGTSFGAPTEIENKLAKLVIERVPSIEIVRMVNSGTEATMSALRLARGYTGRNKILKFIGCYHGHGDSLLIKAGSGVATLGLPDSPGVPEGVAKNTITVAYNDLESVKYAFEQFGDDIACVIVEPVAGNMGVVPPQPGFLEGLREVTEQNGALLIFDEVMTGFRVAYNCGQGYYGVTPDLTCLGKVIGGGLPVGAYGGKAEIMRQVAPSGPIYQAGTLSGNPLAMAAGYETLVQLTPESYVEFERKAEMLEAGLRKAAEKHGIPHHINRAGSMIGIFFTDEPVINYDAAKSSNLQFFAAYYREMVEQGVFLPPSQFEGLFLSTVHSDADIEATIAAAEIAMSKLKA</sequence>
<keyword id="KW-0002">3D-structure</keyword>
<keyword id="KW-0963">Cytoplasm</keyword>
<keyword id="KW-0413">Isomerase</keyword>
<keyword id="KW-0627">Porphyrin biosynthesis</keyword>
<keyword id="KW-0663">Pyridoxal phosphate</keyword>
<keyword id="KW-1185">Reference proteome</keyword>
<evidence type="ECO:0000255" key="1">
    <source>
        <dbReference type="HAMAP-Rule" id="MF_00375"/>
    </source>
</evidence>
<evidence type="ECO:0007829" key="2">
    <source>
        <dbReference type="PDB" id="3K28"/>
    </source>
</evidence>
<gene>
    <name evidence="1" type="primary">hemL2</name>
    <name type="ordered locus">BA_4693</name>
    <name type="ordered locus">GBAA_4693</name>
    <name type="ordered locus">BAS4358</name>
</gene>
<name>GSA2_BACAN</name>
<dbReference type="EC" id="5.4.3.8" evidence="1"/>
<dbReference type="EMBL" id="AE016879">
    <property type="protein sequence ID" value="AAP28392.1"/>
    <property type="molecule type" value="Genomic_DNA"/>
</dbReference>
<dbReference type="EMBL" id="AE017225">
    <property type="protein sequence ID" value="AAT56656.1"/>
    <property type="molecule type" value="Genomic_DNA"/>
</dbReference>
<dbReference type="EMBL" id="AE017334">
    <property type="protein sequence ID" value="AAT33816.1"/>
    <property type="molecule type" value="Genomic_DNA"/>
</dbReference>
<dbReference type="RefSeq" id="NP_846906.1">
    <property type="nucleotide sequence ID" value="NC_003997.3"/>
</dbReference>
<dbReference type="RefSeq" id="YP_030605.1">
    <property type="nucleotide sequence ID" value="NC_005945.1"/>
</dbReference>
<dbReference type="PDB" id="3K28">
    <property type="method" value="X-ray"/>
    <property type="resolution" value="1.95 A"/>
    <property type="chains" value="A/B/C/D=1-429"/>
</dbReference>
<dbReference type="PDBsum" id="3K28"/>
<dbReference type="SMR" id="Q81LD0"/>
<dbReference type="IntAct" id="Q81LD0">
    <property type="interactions" value="22"/>
</dbReference>
<dbReference type="STRING" id="261594.GBAA_4693"/>
<dbReference type="DNASU" id="1083709"/>
<dbReference type="GeneID" id="45024333"/>
<dbReference type="KEGG" id="ban:BA_4693"/>
<dbReference type="KEGG" id="banh:HYU01_22885"/>
<dbReference type="KEGG" id="bar:GBAA_4693"/>
<dbReference type="KEGG" id="bat:BAS4358"/>
<dbReference type="PATRIC" id="fig|198094.11.peg.4658"/>
<dbReference type="eggNOG" id="COG0001">
    <property type="taxonomic scope" value="Bacteria"/>
</dbReference>
<dbReference type="HOGENOM" id="CLU_016922_1_5_9"/>
<dbReference type="OMA" id="WGPLIFG"/>
<dbReference type="OrthoDB" id="9807885at2"/>
<dbReference type="UniPathway" id="UPA00251">
    <property type="reaction ID" value="UER00317"/>
</dbReference>
<dbReference type="EvolutionaryTrace" id="Q81LD0"/>
<dbReference type="Proteomes" id="UP000000427">
    <property type="component" value="Chromosome"/>
</dbReference>
<dbReference type="Proteomes" id="UP000000594">
    <property type="component" value="Chromosome"/>
</dbReference>
<dbReference type="GO" id="GO:0005737">
    <property type="term" value="C:cytoplasm"/>
    <property type="evidence" value="ECO:0007669"/>
    <property type="project" value="UniProtKB-SubCell"/>
</dbReference>
<dbReference type="GO" id="GO:0042286">
    <property type="term" value="F:glutamate-1-semialdehyde 2,1-aminomutase activity"/>
    <property type="evidence" value="ECO:0007669"/>
    <property type="project" value="UniProtKB-UniRule"/>
</dbReference>
<dbReference type="GO" id="GO:0030170">
    <property type="term" value="F:pyridoxal phosphate binding"/>
    <property type="evidence" value="ECO:0007669"/>
    <property type="project" value="InterPro"/>
</dbReference>
<dbReference type="GO" id="GO:0008483">
    <property type="term" value="F:transaminase activity"/>
    <property type="evidence" value="ECO:0007669"/>
    <property type="project" value="InterPro"/>
</dbReference>
<dbReference type="GO" id="GO:0006782">
    <property type="term" value="P:protoporphyrinogen IX biosynthetic process"/>
    <property type="evidence" value="ECO:0007669"/>
    <property type="project" value="UniProtKB-UniRule"/>
</dbReference>
<dbReference type="CDD" id="cd00610">
    <property type="entry name" value="OAT_like"/>
    <property type="match status" value="1"/>
</dbReference>
<dbReference type="FunFam" id="3.40.640.10:FF:000021">
    <property type="entry name" value="Glutamate-1-semialdehyde 2,1-aminomutase"/>
    <property type="match status" value="1"/>
</dbReference>
<dbReference type="Gene3D" id="3.90.1150.10">
    <property type="entry name" value="Aspartate Aminotransferase, domain 1"/>
    <property type="match status" value="1"/>
</dbReference>
<dbReference type="Gene3D" id="3.40.640.10">
    <property type="entry name" value="Type I PLP-dependent aspartate aminotransferase-like (Major domain)"/>
    <property type="match status" value="1"/>
</dbReference>
<dbReference type="HAMAP" id="MF_00375">
    <property type="entry name" value="HemL_aminotrans_3"/>
    <property type="match status" value="1"/>
</dbReference>
<dbReference type="InterPro" id="IPR004639">
    <property type="entry name" value="4pyrrol_synth_GluAld_NH2Trfase"/>
</dbReference>
<dbReference type="InterPro" id="IPR005814">
    <property type="entry name" value="Aminotrans_3"/>
</dbReference>
<dbReference type="InterPro" id="IPR049704">
    <property type="entry name" value="Aminotrans_3_PPA_site"/>
</dbReference>
<dbReference type="InterPro" id="IPR015424">
    <property type="entry name" value="PyrdxlP-dep_Trfase"/>
</dbReference>
<dbReference type="InterPro" id="IPR015421">
    <property type="entry name" value="PyrdxlP-dep_Trfase_major"/>
</dbReference>
<dbReference type="InterPro" id="IPR015422">
    <property type="entry name" value="PyrdxlP-dep_Trfase_small"/>
</dbReference>
<dbReference type="NCBIfam" id="TIGR00713">
    <property type="entry name" value="hemL"/>
    <property type="match status" value="1"/>
</dbReference>
<dbReference type="NCBIfam" id="NF000818">
    <property type="entry name" value="PRK00062.1"/>
    <property type="match status" value="1"/>
</dbReference>
<dbReference type="PANTHER" id="PTHR43713">
    <property type="entry name" value="GLUTAMATE-1-SEMIALDEHYDE 2,1-AMINOMUTASE"/>
    <property type="match status" value="1"/>
</dbReference>
<dbReference type="PANTHER" id="PTHR43713:SF3">
    <property type="entry name" value="GLUTAMATE-1-SEMIALDEHYDE 2,1-AMINOMUTASE 1, CHLOROPLASTIC-RELATED"/>
    <property type="match status" value="1"/>
</dbReference>
<dbReference type="Pfam" id="PF00202">
    <property type="entry name" value="Aminotran_3"/>
    <property type="match status" value="1"/>
</dbReference>
<dbReference type="SUPFAM" id="SSF53383">
    <property type="entry name" value="PLP-dependent transferases"/>
    <property type="match status" value="1"/>
</dbReference>
<dbReference type="PROSITE" id="PS00600">
    <property type="entry name" value="AA_TRANSFER_CLASS_3"/>
    <property type="match status" value="1"/>
</dbReference>
<comment type="catalytic activity">
    <reaction evidence="1">
        <text>(S)-4-amino-5-oxopentanoate = 5-aminolevulinate</text>
        <dbReference type="Rhea" id="RHEA:14265"/>
        <dbReference type="ChEBI" id="CHEBI:57501"/>
        <dbReference type="ChEBI" id="CHEBI:356416"/>
        <dbReference type="EC" id="5.4.3.8"/>
    </reaction>
</comment>
<comment type="cofactor">
    <cofactor evidence="1">
        <name>pyridoxal 5'-phosphate</name>
        <dbReference type="ChEBI" id="CHEBI:597326"/>
    </cofactor>
</comment>
<comment type="pathway">
    <text evidence="1">Porphyrin-containing compound metabolism; protoporphyrin-IX biosynthesis; 5-aminolevulinate from L-glutamyl-tRNA(Glu): step 2/2.</text>
</comment>
<comment type="subunit">
    <text evidence="1">Homodimer.</text>
</comment>
<comment type="subcellular location">
    <subcellularLocation>
        <location evidence="1">Cytoplasm</location>
    </subcellularLocation>
</comment>
<comment type="similarity">
    <text evidence="1">Belongs to the class-III pyridoxal-phosphate-dependent aminotransferase family. HemL subfamily.</text>
</comment>
<reference key="1">
    <citation type="journal article" date="2003" name="Nature">
        <title>The genome sequence of Bacillus anthracis Ames and comparison to closely related bacteria.</title>
        <authorList>
            <person name="Read T.D."/>
            <person name="Peterson S.N."/>
            <person name="Tourasse N.J."/>
            <person name="Baillie L.W."/>
            <person name="Paulsen I.T."/>
            <person name="Nelson K.E."/>
            <person name="Tettelin H."/>
            <person name="Fouts D.E."/>
            <person name="Eisen J.A."/>
            <person name="Gill S.R."/>
            <person name="Holtzapple E.K."/>
            <person name="Okstad O.A."/>
            <person name="Helgason E."/>
            <person name="Rilstone J."/>
            <person name="Wu M."/>
            <person name="Kolonay J.F."/>
            <person name="Beanan M.J."/>
            <person name="Dodson R.J."/>
            <person name="Brinkac L.M."/>
            <person name="Gwinn M.L."/>
            <person name="DeBoy R.T."/>
            <person name="Madpu R."/>
            <person name="Daugherty S.C."/>
            <person name="Durkin A.S."/>
            <person name="Haft D.H."/>
            <person name="Nelson W.C."/>
            <person name="Peterson J.D."/>
            <person name="Pop M."/>
            <person name="Khouri H.M."/>
            <person name="Radune D."/>
            <person name="Benton J.L."/>
            <person name="Mahamoud Y."/>
            <person name="Jiang L."/>
            <person name="Hance I.R."/>
            <person name="Weidman J.F."/>
            <person name="Berry K.J."/>
            <person name="Plaut R.D."/>
            <person name="Wolf A.M."/>
            <person name="Watkins K.L."/>
            <person name="Nierman W.C."/>
            <person name="Hazen A."/>
            <person name="Cline R.T."/>
            <person name="Redmond C."/>
            <person name="Thwaite J.E."/>
            <person name="White O."/>
            <person name="Salzberg S.L."/>
            <person name="Thomason B."/>
            <person name="Friedlander A.M."/>
            <person name="Koehler T.M."/>
            <person name="Hanna P.C."/>
            <person name="Kolstoe A.-B."/>
            <person name="Fraser C.M."/>
        </authorList>
    </citation>
    <scope>NUCLEOTIDE SEQUENCE [LARGE SCALE GENOMIC DNA]</scope>
    <source>
        <strain>Ames / isolate Porton</strain>
    </source>
</reference>
<reference key="2">
    <citation type="submission" date="2004-01" db="EMBL/GenBank/DDBJ databases">
        <title>Complete genome sequence of Bacillus anthracis Sterne.</title>
        <authorList>
            <person name="Brettin T.S."/>
            <person name="Bruce D."/>
            <person name="Challacombe J.F."/>
            <person name="Gilna P."/>
            <person name="Han C."/>
            <person name="Hill K."/>
            <person name="Hitchcock P."/>
            <person name="Jackson P."/>
            <person name="Keim P."/>
            <person name="Longmire J."/>
            <person name="Lucas S."/>
            <person name="Okinaka R."/>
            <person name="Richardson P."/>
            <person name="Rubin E."/>
            <person name="Tice H."/>
        </authorList>
    </citation>
    <scope>NUCLEOTIDE SEQUENCE [LARGE SCALE GENOMIC DNA]</scope>
    <source>
        <strain>Sterne</strain>
    </source>
</reference>
<reference key="3">
    <citation type="journal article" date="2009" name="J. Bacteriol.">
        <title>The complete genome sequence of Bacillus anthracis Ames 'Ancestor'.</title>
        <authorList>
            <person name="Ravel J."/>
            <person name="Jiang L."/>
            <person name="Stanley S.T."/>
            <person name="Wilson M.R."/>
            <person name="Decker R.S."/>
            <person name="Read T.D."/>
            <person name="Worsham P."/>
            <person name="Keim P.S."/>
            <person name="Salzberg S.L."/>
            <person name="Fraser-Liggett C.M."/>
            <person name="Rasko D.A."/>
        </authorList>
    </citation>
    <scope>NUCLEOTIDE SEQUENCE [LARGE SCALE GENOMIC DNA]</scope>
    <source>
        <strain>Ames ancestor</strain>
    </source>
</reference>
<proteinExistence type="evidence at protein level"/>
<feature type="chain" id="PRO_0000243537" description="Glutamate-1-semialdehyde 2,1-aminomutase 2">
    <location>
        <begin position="1"/>
        <end position="429"/>
    </location>
</feature>
<feature type="modified residue" description="N6-(pyridoxal phosphate)lysine" evidence="1">
    <location>
        <position position="268"/>
    </location>
</feature>
<feature type="helix" evidence="2">
    <location>
        <begin position="5"/>
        <end position="14"/>
    </location>
</feature>
<feature type="turn" evidence="2">
    <location>
        <begin position="15"/>
        <end position="17"/>
    </location>
</feature>
<feature type="helix" evidence="2">
    <location>
        <begin position="19"/>
        <end position="21"/>
    </location>
</feature>
<feature type="strand" evidence="2">
    <location>
        <begin position="22"/>
        <end position="24"/>
    </location>
</feature>
<feature type="helix" evidence="2">
    <location>
        <begin position="25"/>
        <end position="28"/>
    </location>
</feature>
<feature type="helix" evidence="2">
    <location>
        <begin position="30"/>
        <end position="32"/>
    </location>
</feature>
<feature type="strand" evidence="2">
    <location>
        <begin position="39"/>
        <end position="44"/>
    </location>
</feature>
<feature type="strand" evidence="2">
    <location>
        <begin position="46"/>
        <end position="49"/>
    </location>
</feature>
<feature type="strand" evidence="2">
    <location>
        <begin position="54"/>
        <end position="58"/>
    </location>
</feature>
<feature type="helix" evidence="2">
    <location>
        <begin position="60"/>
        <end position="62"/>
    </location>
</feature>
<feature type="helix" evidence="2">
    <location>
        <begin position="72"/>
        <end position="84"/>
    </location>
</feature>
<feature type="helix" evidence="2">
    <location>
        <begin position="93"/>
        <end position="105"/>
    </location>
</feature>
<feature type="strand" evidence="2">
    <location>
        <begin position="110"/>
        <end position="117"/>
    </location>
</feature>
<feature type="helix" evidence="2">
    <location>
        <begin position="118"/>
        <end position="133"/>
    </location>
</feature>
<feature type="strand" evidence="2">
    <location>
        <begin position="137"/>
        <end position="142"/>
    </location>
</feature>
<feature type="helix" evidence="2">
    <location>
        <begin position="150"/>
        <end position="152"/>
    </location>
</feature>
<feature type="helix" evidence="2">
    <location>
        <begin position="173"/>
        <end position="176"/>
    </location>
</feature>
<feature type="strand" evidence="2">
    <location>
        <begin position="179"/>
        <end position="183"/>
    </location>
</feature>
<feature type="helix" evidence="2">
    <location>
        <begin position="187"/>
        <end position="197"/>
    </location>
</feature>
<feature type="helix" evidence="2">
    <location>
        <begin position="198"/>
        <end position="200"/>
    </location>
</feature>
<feature type="strand" evidence="2">
    <location>
        <begin position="201"/>
        <end position="206"/>
    </location>
</feature>
<feature type="strand" evidence="2">
    <location>
        <begin position="208"/>
        <end position="210"/>
    </location>
</feature>
<feature type="helix" evidence="2">
    <location>
        <begin position="222"/>
        <end position="233"/>
    </location>
</feature>
<feature type="strand" evidence="2">
    <location>
        <begin position="236"/>
        <end position="240"/>
    </location>
</feature>
<feature type="turn" evidence="2">
    <location>
        <begin position="242"/>
        <end position="247"/>
    </location>
</feature>
<feature type="helix" evidence="2">
    <location>
        <begin position="252"/>
        <end position="257"/>
    </location>
</feature>
<feature type="strand" evidence="2">
    <location>
        <begin position="262"/>
        <end position="266"/>
    </location>
</feature>
<feature type="helix" evidence="2">
    <location>
        <begin position="268"/>
        <end position="271"/>
    </location>
</feature>
<feature type="strand" evidence="2">
    <location>
        <begin position="277"/>
        <end position="281"/>
    </location>
</feature>
<feature type="helix" evidence="2">
    <location>
        <begin position="283"/>
        <end position="286"/>
    </location>
</feature>
<feature type="turn" evidence="2">
    <location>
        <begin position="290"/>
        <end position="292"/>
    </location>
</feature>
<feature type="strand" evidence="2">
    <location>
        <begin position="293"/>
        <end position="295"/>
    </location>
</feature>
<feature type="turn" evidence="2">
    <location>
        <begin position="300"/>
        <end position="303"/>
    </location>
</feature>
<feature type="helix" evidence="2">
    <location>
        <begin position="305"/>
        <end position="316"/>
    </location>
</feature>
<feature type="helix" evidence="2">
    <location>
        <begin position="320"/>
        <end position="343"/>
    </location>
</feature>
<feature type="strand" evidence="2">
    <location>
        <begin position="349"/>
        <end position="353"/>
    </location>
</feature>
<feature type="strand" evidence="2">
    <location>
        <begin position="356"/>
        <end position="364"/>
    </location>
</feature>
<feature type="helix" evidence="2">
    <location>
        <begin position="369"/>
        <end position="372"/>
    </location>
</feature>
<feature type="helix" evidence="2">
    <location>
        <begin position="377"/>
        <end position="389"/>
    </location>
</feature>
<feature type="helix" evidence="2">
    <location>
        <begin position="410"/>
        <end position="425"/>
    </location>
</feature>
<accession>Q81LD0</accession>
<accession>Q6HST3</accession>
<accession>Q6KM26</accession>
<protein>
    <recommendedName>
        <fullName evidence="1">Glutamate-1-semialdehyde 2,1-aminomutase 2</fullName>
        <shortName evidence="1">GSA 2</shortName>
        <ecNumber evidence="1">5.4.3.8</ecNumber>
    </recommendedName>
    <alternativeName>
        <fullName evidence="1">Glutamate-1-semialdehyde aminotransferase 2</fullName>
        <shortName evidence="1">GSA-AT 2</shortName>
    </alternativeName>
</protein>
<organism>
    <name type="scientific">Bacillus anthracis</name>
    <dbReference type="NCBI Taxonomy" id="1392"/>
    <lineage>
        <taxon>Bacteria</taxon>
        <taxon>Bacillati</taxon>
        <taxon>Bacillota</taxon>
        <taxon>Bacilli</taxon>
        <taxon>Bacillales</taxon>
        <taxon>Bacillaceae</taxon>
        <taxon>Bacillus</taxon>
        <taxon>Bacillus cereus group</taxon>
    </lineage>
</organism>